<comment type="function">
    <text evidence="2 3">Tyrosine-protein kinase that acts as a cell-surface receptor for VEGFC and VEGFD, and plays an essential role in lymphangiogenesis and in the development of the vascular network and the cardiovascular system during embryonic development. Promotes proliferation, survival and migration of endothelial cells, and regulates angiogenic sprouting. Mediates activation of the MAPK1/ERK2, MAPK3/ERK1 signaling pathway, of MAPK8 and the JUN signaling pathway, and of the AKT1 signaling pathway (By similarity).</text>
</comment>
<comment type="catalytic activity">
    <reaction evidence="7">
        <text>L-tyrosyl-[protein] + ATP = O-phospho-L-tyrosyl-[protein] + ADP + H(+)</text>
        <dbReference type="Rhea" id="RHEA:10596"/>
        <dbReference type="Rhea" id="RHEA-COMP:10136"/>
        <dbReference type="Rhea" id="RHEA-COMP:20101"/>
        <dbReference type="ChEBI" id="CHEBI:15378"/>
        <dbReference type="ChEBI" id="CHEBI:30616"/>
        <dbReference type="ChEBI" id="CHEBI:46858"/>
        <dbReference type="ChEBI" id="CHEBI:61978"/>
        <dbReference type="ChEBI" id="CHEBI:456216"/>
        <dbReference type="EC" id="2.7.10.1"/>
    </reaction>
</comment>
<comment type="activity regulation">
    <text evidence="2">Present in an inactive conformation in the absence of bound ligand. Binding of VEGFC or VEGFD leads to dimerization and activation by autophosphorylation on tyrosine residues (By similarity).</text>
</comment>
<comment type="subunit">
    <text evidence="2">Interacts with VEGFC and VEGFD. Monomer in the absence of bound VEGFC or VEGFD. Homodimer in the presence of bound VEGFC or VEGFD (By similarity).</text>
</comment>
<comment type="subcellular location">
    <subcellularLocation>
        <location evidence="3">Cell membrane</location>
        <topology evidence="3">Single-pass type I membrane protein</topology>
    </subcellularLocation>
    <subcellularLocation>
        <location evidence="3">Cytoplasm</location>
    </subcellularLocation>
    <subcellularLocation>
        <location evidence="2">Nucleus</location>
    </subcellularLocation>
    <text evidence="3">Ligand-mediated autophosphorylation leads to rapid internalization.</text>
</comment>
<comment type="domain">
    <text evidence="2">The first and second Ig-like C2-type (immunoglobulin-like) domains are sufficient for VEGFC binding. The fourth and fifth Ig-like C2-type (immunoglobulin-like) domains are sufficient for homodimerization. The fifth and seventh Ig-like C2-type (immunoglobulin-like) domains are required for autophosphorylation and further activation.</text>
</comment>
<comment type="PTM">
    <text evidence="2">Autophosphorylated on tyrosine residues upon ligand binding. Autophosphorylation occurs in trans, i.e. one subunit of the dimeric receptor phosphorylates tyrosine residues on the other subunit (By similarity).</text>
</comment>
<comment type="similarity">
    <text evidence="6">Belongs to the protein kinase superfamily. Tyr protein kinase family. CSF-1/PDGF receptor subfamily.</text>
</comment>
<keyword id="KW-0037">Angiogenesis</keyword>
<keyword id="KW-0067">ATP-binding</keyword>
<keyword id="KW-1003">Cell membrane</keyword>
<keyword id="KW-0963">Cytoplasm</keyword>
<keyword id="KW-0221">Differentiation</keyword>
<keyword id="KW-1015">Disulfide bond</keyword>
<keyword id="KW-0325">Glycoprotein</keyword>
<keyword id="KW-0393">Immunoglobulin domain</keyword>
<keyword id="KW-0418">Kinase</keyword>
<keyword id="KW-0472">Membrane</keyword>
<keyword id="KW-0547">Nucleotide-binding</keyword>
<keyword id="KW-0539">Nucleus</keyword>
<keyword id="KW-0597">Phosphoprotein</keyword>
<keyword id="KW-0675">Receptor</keyword>
<keyword id="KW-0677">Repeat</keyword>
<keyword id="KW-0732">Signal</keyword>
<keyword id="KW-0808">Transferase</keyword>
<keyword id="KW-0812">Transmembrane</keyword>
<keyword id="KW-1133">Transmembrane helix</keyword>
<keyword id="KW-0829">Tyrosine-protein kinase</keyword>
<protein>
    <recommendedName>
        <fullName>Vascular endothelial growth factor receptor 3</fullName>
        <shortName>VEGFR-3</shortName>
        <ecNumber>2.7.10.1</ecNumber>
    </recommendedName>
    <alternativeName>
        <fullName>Endothelial kinase receptor EK2</fullName>
    </alternativeName>
    <alternativeName>
        <fullName>Quek 2</fullName>
        <shortName>Quek2</shortName>
    </alternativeName>
</protein>
<dbReference type="EC" id="2.7.10.1"/>
<dbReference type="EMBL" id="X83287">
    <property type="protein sequence ID" value="CAA58267.1"/>
    <property type="molecule type" value="mRNA"/>
</dbReference>
<dbReference type="SMR" id="P79701"/>
<dbReference type="GlyCosmos" id="P79701">
    <property type="glycosylation" value="12 sites, No reported glycans"/>
</dbReference>
<dbReference type="GO" id="GO:0005737">
    <property type="term" value="C:cytoplasm"/>
    <property type="evidence" value="ECO:0007669"/>
    <property type="project" value="UniProtKB-SubCell"/>
</dbReference>
<dbReference type="GO" id="GO:0005634">
    <property type="term" value="C:nucleus"/>
    <property type="evidence" value="ECO:0007669"/>
    <property type="project" value="UniProtKB-SubCell"/>
</dbReference>
<dbReference type="GO" id="GO:0005886">
    <property type="term" value="C:plasma membrane"/>
    <property type="evidence" value="ECO:0007669"/>
    <property type="project" value="UniProtKB-SubCell"/>
</dbReference>
<dbReference type="GO" id="GO:0043235">
    <property type="term" value="C:receptor complex"/>
    <property type="evidence" value="ECO:0007669"/>
    <property type="project" value="TreeGrafter"/>
</dbReference>
<dbReference type="GO" id="GO:0005524">
    <property type="term" value="F:ATP binding"/>
    <property type="evidence" value="ECO:0007669"/>
    <property type="project" value="UniProtKB-KW"/>
</dbReference>
<dbReference type="GO" id="GO:0019838">
    <property type="term" value="F:growth factor binding"/>
    <property type="evidence" value="ECO:0007669"/>
    <property type="project" value="TreeGrafter"/>
</dbReference>
<dbReference type="GO" id="GO:0042803">
    <property type="term" value="F:protein homodimerization activity"/>
    <property type="evidence" value="ECO:0000250"/>
    <property type="project" value="UniProtKB"/>
</dbReference>
<dbReference type="GO" id="GO:0005021">
    <property type="term" value="F:vascular endothelial growth factor receptor activity"/>
    <property type="evidence" value="ECO:0000250"/>
    <property type="project" value="UniProtKB"/>
</dbReference>
<dbReference type="GO" id="GO:0001525">
    <property type="term" value="P:angiogenesis"/>
    <property type="evidence" value="ECO:0007669"/>
    <property type="project" value="UniProtKB-KW"/>
</dbReference>
<dbReference type="GO" id="GO:0030154">
    <property type="term" value="P:cell differentiation"/>
    <property type="evidence" value="ECO:0007669"/>
    <property type="project" value="UniProtKB-KW"/>
</dbReference>
<dbReference type="GO" id="GO:0030335">
    <property type="term" value="P:positive regulation of cell migration"/>
    <property type="evidence" value="ECO:0007669"/>
    <property type="project" value="TreeGrafter"/>
</dbReference>
<dbReference type="GO" id="GO:0046777">
    <property type="term" value="P:protein autophosphorylation"/>
    <property type="evidence" value="ECO:0000250"/>
    <property type="project" value="UniProtKB"/>
</dbReference>
<dbReference type="GO" id="GO:0043408">
    <property type="term" value="P:regulation of MAPK cascade"/>
    <property type="evidence" value="ECO:0007669"/>
    <property type="project" value="TreeGrafter"/>
</dbReference>
<dbReference type="GO" id="GO:0048010">
    <property type="term" value="P:vascular endothelial growth factor receptor signaling pathway"/>
    <property type="evidence" value="ECO:0007669"/>
    <property type="project" value="TreeGrafter"/>
</dbReference>
<dbReference type="GO" id="GO:0038084">
    <property type="term" value="P:vascular endothelial growth factor signaling pathway"/>
    <property type="evidence" value="ECO:0000250"/>
    <property type="project" value="UniProtKB"/>
</dbReference>
<dbReference type="CDD" id="cd00096">
    <property type="entry name" value="Ig"/>
    <property type="match status" value="1"/>
</dbReference>
<dbReference type="CDD" id="cd05862">
    <property type="entry name" value="IgI_VEGFR"/>
    <property type="match status" value="1"/>
</dbReference>
<dbReference type="CDD" id="cd05863">
    <property type="entry name" value="IgI_VEGFR-3"/>
    <property type="match status" value="1"/>
</dbReference>
<dbReference type="CDD" id="cd05102">
    <property type="entry name" value="PTKc_VEGFR3"/>
    <property type="match status" value="1"/>
</dbReference>
<dbReference type="FunFam" id="1.10.510.10:FF:000077">
    <property type="entry name" value="Vascular endothelial growth factor receptor 2"/>
    <property type="match status" value="1"/>
</dbReference>
<dbReference type="FunFam" id="2.60.40.10:FF:000532">
    <property type="entry name" value="Vascular endothelial growth factor receptor 2"/>
    <property type="match status" value="1"/>
</dbReference>
<dbReference type="FunFam" id="3.30.200.20:FF:000041">
    <property type="entry name" value="Vascular endothelial growth factor receptor 2"/>
    <property type="match status" value="1"/>
</dbReference>
<dbReference type="FunFam" id="2.60.40.10:FF:000143">
    <property type="entry name" value="Vascular endothelial growth factor receptor 3"/>
    <property type="match status" value="1"/>
</dbReference>
<dbReference type="FunFam" id="2.60.40.10:FF:000247">
    <property type="entry name" value="Vascular endothelial growth factor receptor 3"/>
    <property type="match status" value="1"/>
</dbReference>
<dbReference type="FunFam" id="2.60.40.10:FF:000411">
    <property type="entry name" value="Vascular endothelial growth factor receptor 3"/>
    <property type="match status" value="1"/>
</dbReference>
<dbReference type="FunFam" id="2.60.40.10:FF:000479">
    <property type="entry name" value="Vascular endothelial growth factor receptor 3"/>
    <property type="match status" value="1"/>
</dbReference>
<dbReference type="FunFam" id="2.60.40.10:FF:000548">
    <property type="entry name" value="vascular endothelial growth factor receptor 3"/>
    <property type="match status" value="1"/>
</dbReference>
<dbReference type="FunFam" id="2.60.40.10:FF:000949">
    <property type="entry name" value="vascular endothelial growth factor receptor 3"/>
    <property type="match status" value="1"/>
</dbReference>
<dbReference type="Gene3D" id="2.60.40.10">
    <property type="entry name" value="Immunoglobulins"/>
    <property type="match status" value="7"/>
</dbReference>
<dbReference type="Gene3D" id="3.30.200.20">
    <property type="entry name" value="Phosphorylase Kinase, domain 1"/>
    <property type="match status" value="1"/>
</dbReference>
<dbReference type="Gene3D" id="1.10.510.10">
    <property type="entry name" value="Transferase(Phosphotransferase) domain 1"/>
    <property type="match status" value="1"/>
</dbReference>
<dbReference type="InterPro" id="IPR007110">
    <property type="entry name" value="Ig-like_dom"/>
</dbReference>
<dbReference type="InterPro" id="IPR036179">
    <property type="entry name" value="Ig-like_dom_sf"/>
</dbReference>
<dbReference type="InterPro" id="IPR013783">
    <property type="entry name" value="Ig-like_fold"/>
</dbReference>
<dbReference type="InterPro" id="IPR013098">
    <property type="entry name" value="Ig_I-set"/>
</dbReference>
<dbReference type="InterPro" id="IPR003599">
    <property type="entry name" value="Ig_sub"/>
</dbReference>
<dbReference type="InterPro" id="IPR003598">
    <property type="entry name" value="Ig_sub2"/>
</dbReference>
<dbReference type="InterPro" id="IPR011009">
    <property type="entry name" value="Kinase-like_dom_sf"/>
</dbReference>
<dbReference type="InterPro" id="IPR000719">
    <property type="entry name" value="Prot_kinase_dom"/>
</dbReference>
<dbReference type="InterPro" id="IPR017441">
    <property type="entry name" value="Protein_kinase_ATP_BS"/>
</dbReference>
<dbReference type="InterPro" id="IPR050122">
    <property type="entry name" value="RTK"/>
</dbReference>
<dbReference type="InterPro" id="IPR001245">
    <property type="entry name" value="Ser-Thr/Tyr_kinase_cat_dom"/>
</dbReference>
<dbReference type="InterPro" id="IPR008266">
    <property type="entry name" value="Tyr_kinase_AS"/>
</dbReference>
<dbReference type="InterPro" id="IPR020635">
    <property type="entry name" value="Tyr_kinase_cat_dom"/>
</dbReference>
<dbReference type="InterPro" id="IPR001824">
    <property type="entry name" value="Tyr_kinase_rcpt_3_CS"/>
</dbReference>
<dbReference type="InterPro" id="IPR041348">
    <property type="entry name" value="VEGFR-2_TMD"/>
</dbReference>
<dbReference type="InterPro" id="IPR055229">
    <property type="entry name" value="VEGFR1-3_5th"/>
</dbReference>
<dbReference type="PANTHER" id="PTHR24416">
    <property type="entry name" value="TYROSINE-PROTEIN KINASE RECEPTOR"/>
    <property type="match status" value="1"/>
</dbReference>
<dbReference type="PANTHER" id="PTHR24416:SF49">
    <property type="entry name" value="VASCULAR ENDOTHELIAL GROWTH FACTOR RECEPTOR 3"/>
    <property type="match status" value="1"/>
</dbReference>
<dbReference type="Pfam" id="PF07679">
    <property type="entry name" value="I-set"/>
    <property type="match status" value="1"/>
</dbReference>
<dbReference type="Pfam" id="PF13927">
    <property type="entry name" value="Ig_3"/>
    <property type="match status" value="3"/>
</dbReference>
<dbReference type="Pfam" id="PF22971">
    <property type="entry name" value="Ig_VEGFR-1-like_5th"/>
    <property type="match status" value="1"/>
</dbReference>
<dbReference type="Pfam" id="PF07714">
    <property type="entry name" value="PK_Tyr_Ser-Thr"/>
    <property type="match status" value="1"/>
</dbReference>
<dbReference type="Pfam" id="PF21339">
    <property type="entry name" value="VEGFR-1-like_Ig-like"/>
    <property type="match status" value="1"/>
</dbReference>
<dbReference type="Pfam" id="PF17988">
    <property type="entry name" value="VEGFR-2_TMD"/>
    <property type="match status" value="1"/>
</dbReference>
<dbReference type="PIRSF" id="PIRSF000615">
    <property type="entry name" value="TyrPK_CSF1-R"/>
    <property type="match status" value="1"/>
</dbReference>
<dbReference type="PRINTS" id="PR01832">
    <property type="entry name" value="VEGFRECEPTOR"/>
</dbReference>
<dbReference type="PRINTS" id="PR01835">
    <property type="entry name" value="VEGFRECEPTR3"/>
</dbReference>
<dbReference type="SMART" id="SM00409">
    <property type="entry name" value="IG"/>
    <property type="match status" value="6"/>
</dbReference>
<dbReference type="SMART" id="SM00408">
    <property type="entry name" value="IGc2"/>
    <property type="match status" value="4"/>
</dbReference>
<dbReference type="SMART" id="SM00219">
    <property type="entry name" value="TyrKc"/>
    <property type="match status" value="1"/>
</dbReference>
<dbReference type="SUPFAM" id="SSF48726">
    <property type="entry name" value="Immunoglobulin"/>
    <property type="match status" value="7"/>
</dbReference>
<dbReference type="SUPFAM" id="SSF56112">
    <property type="entry name" value="Protein kinase-like (PK-like)"/>
    <property type="match status" value="1"/>
</dbReference>
<dbReference type="PROSITE" id="PS50835">
    <property type="entry name" value="IG_LIKE"/>
    <property type="match status" value="5"/>
</dbReference>
<dbReference type="PROSITE" id="PS00107">
    <property type="entry name" value="PROTEIN_KINASE_ATP"/>
    <property type="match status" value="1"/>
</dbReference>
<dbReference type="PROSITE" id="PS50011">
    <property type="entry name" value="PROTEIN_KINASE_DOM"/>
    <property type="match status" value="1"/>
</dbReference>
<dbReference type="PROSITE" id="PS00109">
    <property type="entry name" value="PROTEIN_KINASE_TYR"/>
    <property type="match status" value="1"/>
</dbReference>
<dbReference type="PROSITE" id="PS00240">
    <property type="entry name" value="RECEPTOR_TYR_KIN_III"/>
    <property type="match status" value="1"/>
</dbReference>
<evidence type="ECO:0000250" key="1"/>
<evidence type="ECO:0000250" key="2">
    <source>
        <dbReference type="UniProtKB" id="P35916"/>
    </source>
</evidence>
<evidence type="ECO:0000250" key="3">
    <source>
        <dbReference type="UniProtKB" id="P35917"/>
    </source>
</evidence>
<evidence type="ECO:0000255" key="4"/>
<evidence type="ECO:0000255" key="5">
    <source>
        <dbReference type="PROSITE-ProRule" id="PRU00114"/>
    </source>
</evidence>
<evidence type="ECO:0000255" key="6">
    <source>
        <dbReference type="PROSITE-ProRule" id="PRU00159"/>
    </source>
</evidence>
<evidence type="ECO:0000255" key="7">
    <source>
        <dbReference type="PROSITE-ProRule" id="PRU10028"/>
    </source>
</evidence>
<evidence type="ECO:0000256" key="8">
    <source>
        <dbReference type="SAM" id="MobiDB-lite"/>
    </source>
</evidence>
<organism>
    <name type="scientific">Coturnix coturnix</name>
    <name type="common">Common quail</name>
    <name type="synonym">Tetrao coturnix</name>
    <dbReference type="NCBI Taxonomy" id="9091"/>
    <lineage>
        <taxon>Eukaryota</taxon>
        <taxon>Metazoa</taxon>
        <taxon>Chordata</taxon>
        <taxon>Craniata</taxon>
        <taxon>Vertebrata</taxon>
        <taxon>Euteleostomi</taxon>
        <taxon>Archelosauria</taxon>
        <taxon>Archosauria</taxon>
        <taxon>Dinosauria</taxon>
        <taxon>Saurischia</taxon>
        <taxon>Theropoda</taxon>
        <taxon>Coelurosauria</taxon>
        <taxon>Aves</taxon>
        <taxon>Neognathae</taxon>
        <taxon>Galloanserae</taxon>
        <taxon>Galliformes</taxon>
        <taxon>Phasianidae</taxon>
        <taxon>Perdicinae</taxon>
        <taxon>Coturnix</taxon>
    </lineage>
</organism>
<name>VGFR3_COTCO</name>
<sequence length="1379" mass="156963">MKRVCTLPLWLWLGIVSEADLVSSYSMTPPTLSITEEEHIINAKDTLTITCRGQHPLEWSWPGARWTPVEGRRRWNSQPQQRPVGAGNPEEDCEGTGTKPYCKVLVLTESQANDTGYYHCYYKYIDAKIEGTTAVSAYIFVRDFEQPFINKPETLLISKKENTWVPCLVSIPDLNVTLISQNSLIHPDRKTIFWDNKKGMQVPTQLIRDSLFVQCETVIDNKVFKSNFFIIHIAGIELYDIQLYPKKAMELLVGEKLVLNCTVWAEFNSGVRFQWTYPGKQMQRAVIESERRSLQTHTELSSILTLHNVSQQDLGRYTCTATNGAQMLEESTDVIVHEKPFINVEWRKGPVIEATAGDEAVKLPVKVVAYPQPDFQWYKAGKLIPKQSQSSMQIKDVAEHHAGTYTLVLRNRLVGLEKRISLQLIVNVPPRIHEKETSSPSIYSRRSPQALTCTVYGIPAPEVIQWQWRPWMPCRMFSRRSLNSRHRAARRHQRDRMPECKDWKDVSRQDAVNPIESIDTWVEFVEGRNKTVSKLAIQEANVSAMYKCIASNKVGRDERLIYFYVTTIPDGFEIESQPSEEPIEGQDLQLSCNADNYTYENLQWYRLNLSKLHDEEGNPLVLDCKNVHHYATKMQGELRFQPDSNDATLLLTIPNISLGEEGDYVCEVQNRKTREKHCHKKYISVQALEIPRLKQNLTDIWVNVSDSIEMRCKVDGNHVPDISWYKDEKLVEEVSGIDLADFNQRLSIQRVREEDAGLYLCSVCNAKGCVNSSASVSVEGSDDKTNVEIVILIGTGVIAVFFWILLIIIFCNIKRPAHADIKTGYLSIIMDPGEVPLEEQCAYLPYDSSKWEFPRDRLRLGKVLGHGAFGKVVEASAFGINKSNSCETVAAKMLKEGATASEQKALMSELKILIHIGNHLNVVNLLGACTKPNGPLMVIVEFCKYGNLSNYLRTKREGFSPYREKSPRLRIQVQSIVEAVRADRRSRSGTSDSAIFNRFLMHKSQTVQPIQEVDDLWQSPLTMEDLICYSFQVARGMEFLASRKCIHRDLAARNILLSENNVVKICDFGLARDIYKDPDYVRKGSARLPLKWMAPESIFDKVYTTQSDVWSFGVLLWEIFSLGASPYPGVQINEEFCQRFKDGTRMRAPEYTTAEIYRIMLSCWHGDPKERPTFSDLVEILGNLLQENVQQEGKDYIPLNDSHSSEDDGFSQVPSSAQQNSDEEDFDMRIRCHSLAARYYNCVSFPGCLTGGNQIRCSSRIKTFEEFPMTHTMYKAHPDNQTDSGMVLASEEFERIENRHRKEGGFSSKGPNRTAELSAEQSDLRGRCRPSYGSQVGGQTFYNSEYGELSEHSEDRSCTPPAEGASPPALHASFFSEQY</sequence>
<proteinExistence type="evidence at transcript level"/>
<accession>P79701</accession>
<feature type="signal peptide" evidence="4">
    <location>
        <begin position="1"/>
        <end position="19"/>
    </location>
</feature>
<feature type="chain" id="PRO_0000249463" description="Vascular endothelial growth factor receptor 3">
    <location>
        <begin position="20"/>
        <end position="1379"/>
    </location>
</feature>
<feature type="topological domain" description="Extracellular" evidence="4">
    <location>
        <begin position="20"/>
        <end position="788"/>
    </location>
</feature>
<feature type="transmembrane region" description="Helical" evidence="4">
    <location>
        <begin position="789"/>
        <end position="809"/>
    </location>
</feature>
<feature type="topological domain" description="Cytoplasmic" evidence="4">
    <location>
        <begin position="810"/>
        <end position="1379"/>
    </location>
</feature>
<feature type="domain" description="Ig-like C2-type 1">
    <location>
        <begin position="30"/>
        <end position="136"/>
    </location>
</feature>
<feature type="domain" description="Ig-like C2-type 2">
    <location>
        <begin position="160"/>
        <end position="222"/>
    </location>
</feature>
<feature type="domain" description="Ig-like C2-type 3">
    <location>
        <begin position="240"/>
        <end position="335"/>
    </location>
</feature>
<feature type="domain" description="Ig-like C2-type 4">
    <location>
        <begin position="340"/>
        <end position="421"/>
    </location>
</feature>
<feature type="domain" description="Ig-like C2-type 5">
    <location>
        <begin position="430"/>
        <end position="566"/>
    </location>
</feature>
<feature type="domain" description="Ig-like C2-type 6">
    <location>
        <begin position="569"/>
        <end position="684"/>
    </location>
</feature>
<feature type="domain" description="Ig-like C2-type 7">
    <location>
        <begin position="691"/>
        <end position="777"/>
    </location>
</feature>
<feature type="domain" description="Protein kinase" evidence="6">
    <location>
        <begin position="858"/>
        <end position="1185"/>
    </location>
</feature>
<feature type="region of interest" description="Disordered" evidence="8">
    <location>
        <begin position="73"/>
        <end position="93"/>
    </location>
</feature>
<feature type="region of interest" description="Disordered" evidence="8">
    <location>
        <begin position="1196"/>
        <end position="1224"/>
    </location>
</feature>
<feature type="region of interest" description="Disordered" evidence="8">
    <location>
        <begin position="1299"/>
        <end position="1379"/>
    </location>
</feature>
<feature type="compositionally biased region" description="Polar residues" evidence="8">
    <location>
        <begin position="1332"/>
        <end position="1343"/>
    </location>
</feature>
<feature type="active site" description="Proton acceptor" evidence="6 7">
    <location>
        <position position="1049"/>
    </location>
</feature>
<feature type="binding site" evidence="6">
    <location>
        <begin position="864"/>
        <end position="872"/>
    </location>
    <ligand>
        <name>ATP</name>
        <dbReference type="ChEBI" id="CHEBI:30616"/>
    </ligand>
</feature>
<feature type="binding site" evidence="6">
    <location>
        <position position="892"/>
    </location>
    <ligand>
        <name>ATP</name>
        <dbReference type="ChEBI" id="CHEBI:30616"/>
    </ligand>
</feature>
<feature type="modified residue" description="Phosphotyrosine; by autocatalysis" evidence="1">
    <location>
        <position position="1075"/>
    </location>
</feature>
<feature type="modified residue" description="Phosphotyrosine; by autocatalysis" evidence="1">
    <location>
        <position position="1080"/>
    </location>
</feature>
<feature type="modified residue" description="Phosphotyrosine; by autocatalysis" evidence="1">
    <location>
        <position position="1239"/>
    </location>
</feature>
<feature type="modified residue" description="Phosphotyrosine; by autocatalysis" evidence="1">
    <location>
        <position position="1240"/>
    </location>
</feature>
<feature type="modified residue" description="Phosphotyrosine; by autocatalysis" evidence="1">
    <location>
        <position position="1274"/>
    </location>
</feature>
<feature type="modified residue" description="Phosphotyrosine; by autocatalysis" evidence="1">
    <location>
        <position position="1342"/>
    </location>
</feature>
<feature type="modified residue" description="Phosphotyrosine; by autocatalysis" evidence="1">
    <location>
        <position position="1346"/>
    </location>
</feature>
<feature type="glycosylation site" description="N-linked (GlcNAc...) asparagine" evidence="4">
    <location>
        <position position="113"/>
    </location>
</feature>
<feature type="glycosylation site" description="N-linked (GlcNAc...) asparagine" evidence="4">
    <location>
        <position position="175"/>
    </location>
</feature>
<feature type="glycosylation site" description="N-linked (GlcNAc...) asparagine" evidence="4">
    <location>
        <position position="260"/>
    </location>
</feature>
<feature type="glycosylation site" description="N-linked (GlcNAc...) asparagine" evidence="4">
    <location>
        <position position="308"/>
    </location>
</feature>
<feature type="glycosylation site" description="N-linked (GlcNAc...) asparagine" evidence="4">
    <location>
        <position position="529"/>
    </location>
</feature>
<feature type="glycosylation site" description="N-linked (GlcNAc...) asparagine" evidence="4">
    <location>
        <position position="541"/>
    </location>
</feature>
<feature type="glycosylation site" description="N-linked (GlcNAc...) asparagine" evidence="4">
    <location>
        <position position="596"/>
    </location>
</feature>
<feature type="glycosylation site" description="N-linked (GlcNAc...) asparagine" evidence="4">
    <location>
        <position position="608"/>
    </location>
</feature>
<feature type="glycosylation site" description="N-linked (GlcNAc...) asparagine" evidence="4">
    <location>
        <position position="655"/>
    </location>
</feature>
<feature type="glycosylation site" description="N-linked (GlcNAc...) asparagine" evidence="4">
    <location>
        <position position="696"/>
    </location>
</feature>
<feature type="glycosylation site" description="N-linked (GlcNAc...) asparagine" evidence="4">
    <location>
        <position position="703"/>
    </location>
</feature>
<feature type="glycosylation site" description="N-linked (GlcNAc...) asparagine" evidence="4">
    <location>
        <position position="771"/>
    </location>
</feature>
<feature type="disulfide bond" evidence="5">
    <location>
        <begin position="51"/>
        <end position="120"/>
    </location>
</feature>
<feature type="disulfide bond" evidence="5">
    <location>
        <begin position="167"/>
        <end position="215"/>
    </location>
</feature>
<feature type="disulfide bond" evidence="5">
    <location>
        <begin position="261"/>
        <end position="319"/>
    </location>
</feature>
<feature type="disulfide bond" evidence="5">
    <location>
        <begin position="453"/>
        <end position="548"/>
    </location>
</feature>
<feature type="disulfide bond" evidence="2">
    <location>
        <begin position="474"/>
        <end position="500"/>
    </location>
</feature>
<feature type="disulfide bond" evidence="5">
    <location>
        <begin position="592"/>
        <end position="666"/>
    </location>
</feature>
<feature type="disulfide bond" evidence="5">
    <location>
        <begin position="712"/>
        <end position="761"/>
    </location>
</feature>
<gene>
    <name type="primary">FLT4</name>
    <name type="synonym">K2</name>
    <name type="synonym">VEGFR3</name>
</gene>
<reference key="1">
    <citation type="journal article" date="1996" name="Gene">
        <title>Molecular cloning of Quek 1 and 2, two quail vascular endothelial growth factor (VEGF) receptor-like molecules.</title>
        <authorList>
            <person name="Eichmann A."/>
            <person name="Marcelle C."/>
            <person name="Breant C."/>
            <person name="Le Douarin N.M."/>
        </authorList>
    </citation>
    <scope>NUCLEOTIDE SEQUENCE [MRNA]</scope>
    <source>
        <tissue>Embryo</tissue>
    </source>
</reference>